<protein>
    <recommendedName>
        <fullName>Fez family zinc finger protein 1</fullName>
    </recommendedName>
</protein>
<reference key="1">
    <citation type="journal article" date="2006" name="Development">
        <title>Zinc-finger gene Fez in the olfactory sensory neurons regulates development of the olfactory bulb non-cell-autonomously.</title>
        <authorList>
            <person name="Hirata T."/>
            <person name="Nakazawa M."/>
            <person name="Yoshihara S."/>
            <person name="Miyachi H."/>
            <person name="Kitamura K."/>
            <person name="Yoshihara Y."/>
            <person name="Hibi M."/>
        </authorList>
    </citation>
    <scope>NUCLEOTIDE SEQUENCE [MRNA]</scope>
</reference>
<reference key="2">
    <citation type="submission" date="2006-09" db="EMBL/GenBank/DDBJ databases">
        <authorList>
            <consortium name="NIH - Zebrafish Gene Collection (ZGC) project"/>
        </authorList>
    </citation>
    <scope>NUCLEOTIDE SEQUENCE [LARGE SCALE MRNA]</scope>
    <source>
        <tissue>Olfactory epithelium</tissue>
    </source>
</reference>
<organism>
    <name type="scientific">Danio rerio</name>
    <name type="common">Zebrafish</name>
    <name type="synonym">Brachydanio rerio</name>
    <dbReference type="NCBI Taxonomy" id="7955"/>
    <lineage>
        <taxon>Eukaryota</taxon>
        <taxon>Metazoa</taxon>
        <taxon>Chordata</taxon>
        <taxon>Craniata</taxon>
        <taxon>Vertebrata</taxon>
        <taxon>Euteleostomi</taxon>
        <taxon>Actinopterygii</taxon>
        <taxon>Neopterygii</taxon>
        <taxon>Teleostei</taxon>
        <taxon>Ostariophysi</taxon>
        <taxon>Cypriniformes</taxon>
        <taxon>Danionidae</taxon>
        <taxon>Danioninae</taxon>
        <taxon>Danio</taxon>
    </lineage>
</organism>
<proteinExistence type="evidence at transcript level"/>
<comment type="function">
    <text evidence="1">Transcription repressor. Involved in the development of the forebrain region (By similarity).</text>
</comment>
<comment type="subcellular location">
    <subcellularLocation>
        <location evidence="4">Nucleus</location>
    </subcellularLocation>
</comment>
<comment type="similarity">
    <text evidence="4">Belongs to the krueppel C2H2-type zinc-finger protein family.</text>
</comment>
<dbReference type="EMBL" id="AB207804">
    <property type="protein sequence ID" value="BAE87036.1"/>
    <property type="molecule type" value="mRNA"/>
</dbReference>
<dbReference type="EMBL" id="BC124439">
    <property type="protein sequence ID" value="AAI24440.1"/>
    <property type="molecule type" value="mRNA"/>
</dbReference>
<dbReference type="RefSeq" id="NP_001107820.1">
    <property type="nucleotide sequence ID" value="NM_001114348.1"/>
</dbReference>
<dbReference type="SMR" id="Q25C93"/>
<dbReference type="FunCoup" id="Q25C93">
    <property type="interactions" value="1851"/>
</dbReference>
<dbReference type="STRING" id="7955.ENSDARP00000007655"/>
<dbReference type="PaxDb" id="7955-ENSDARP00000007655"/>
<dbReference type="Ensembl" id="ENSDART00000010325">
    <property type="protein sequence ID" value="ENSDARP00000007655"/>
    <property type="gene ID" value="ENSDARG00000010270"/>
</dbReference>
<dbReference type="GeneID" id="558801"/>
<dbReference type="KEGG" id="dre:558801"/>
<dbReference type="AGR" id="ZFIN:ZDB-GENE-060929-970"/>
<dbReference type="CTD" id="389549"/>
<dbReference type="ZFIN" id="ZDB-GENE-060929-970">
    <property type="gene designation" value="fezf1"/>
</dbReference>
<dbReference type="eggNOG" id="KOG1721">
    <property type="taxonomic scope" value="Eukaryota"/>
</dbReference>
<dbReference type="HOGENOM" id="CLU_021813_2_1_1"/>
<dbReference type="InParanoid" id="Q25C93"/>
<dbReference type="OMA" id="SQIQHYM"/>
<dbReference type="OrthoDB" id="5062908at2759"/>
<dbReference type="PhylomeDB" id="Q25C93"/>
<dbReference type="TreeFam" id="TF316780"/>
<dbReference type="PRO" id="PR:Q25C93"/>
<dbReference type="Proteomes" id="UP000000437">
    <property type="component" value="Chromosome 25"/>
</dbReference>
<dbReference type="Bgee" id="ENSDARG00000010270">
    <property type="expression patterns" value="Expressed in camera-type eye and 3 other cell types or tissues"/>
</dbReference>
<dbReference type="GO" id="GO:0005634">
    <property type="term" value="C:nucleus"/>
    <property type="evidence" value="ECO:0007669"/>
    <property type="project" value="UniProtKB-SubCell"/>
</dbReference>
<dbReference type="GO" id="GO:0003700">
    <property type="term" value="F:DNA-binding transcription factor activity"/>
    <property type="evidence" value="ECO:0000318"/>
    <property type="project" value="GO_Central"/>
</dbReference>
<dbReference type="GO" id="GO:0000978">
    <property type="term" value="F:RNA polymerase II cis-regulatory region sequence-specific DNA binding"/>
    <property type="evidence" value="ECO:0000318"/>
    <property type="project" value="GO_Central"/>
</dbReference>
<dbReference type="GO" id="GO:0008270">
    <property type="term" value="F:zinc ion binding"/>
    <property type="evidence" value="ECO:0007669"/>
    <property type="project" value="UniProtKB-KW"/>
</dbReference>
<dbReference type="GO" id="GO:0030154">
    <property type="term" value="P:cell differentiation"/>
    <property type="evidence" value="ECO:0007669"/>
    <property type="project" value="UniProtKB-KW"/>
</dbReference>
<dbReference type="GO" id="GO:0007399">
    <property type="term" value="P:nervous system development"/>
    <property type="evidence" value="ECO:0007669"/>
    <property type="project" value="UniProtKB-KW"/>
</dbReference>
<dbReference type="GO" id="GO:0006357">
    <property type="term" value="P:regulation of transcription by RNA polymerase II"/>
    <property type="evidence" value="ECO:0000318"/>
    <property type="project" value="GO_Central"/>
</dbReference>
<dbReference type="FunFam" id="3.30.160.60:FF:000103">
    <property type="entry name" value="FEZ family zinc finger 1"/>
    <property type="match status" value="1"/>
</dbReference>
<dbReference type="FunFam" id="3.30.160.60:FF:000251">
    <property type="entry name" value="FEZ family zinc finger 2"/>
    <property type="match status" value="1"/>
</dbReference>
<dbReference type="FunFam" id="3.30.160.60:FF:000227">
    <property type="entry name" value="fez family zinc finger protein 1"/>
    <property type="match status" value="1"/>
</dbReference>
<dbReference type="FunFam" id="3.30.160.60:FF:000164">
    <property type="entry name" value="Fez family zinc finger protein 2"/>
    <property type="match status" value="1"/>
</dbReference>
<dbReference type="FunFam" id="3.30.160.60:FF:000194">
    <property type="entry name" value="Fez family zinc finger protein 2"/>
    <property type="match status" value="1"/>
</dbReference>
<dbReference type="FunFam" id="3.30.160.60:FF:000863">
    <property type="entry name" value="fez family zinc finger protein 2"/>
    <property type="match status" value="1"/>
</dbReference>
<dbReference type="Gene3D" id="3.30.160.60">
    <property type="entry name" value="Classic Zinc Finger"/>
    <property type="match status" value="6"/>
</dbReference>
<dbReference type="InterPro" id="IPR050331">
    <property type="entry name" value="Zinc_finger"/>
</dbReference>
<dbReference type="InterPro" id="IPR036236">
    <property type="entry name" value="Znf_C2H2_sf"/>
</dbReference>
<dbReference type="InterPro" id="IPR013087">
    <property type="entry name" value="Znf_C2H2_type"/>
</dbReference>
<dbReference type="PANTHER" id="PTHR16515:SF35">
    <property type="entry name" value="FEZ FAMILY ZINC FINGER PROTEIN 2"/>
    <property type="match status" value="1"/>
</dbReference>
<dbReference type="PANTHER" id="PTHR16515">
    <property type="entry name" value="PR DOMAIN ZINC FINGER PROTEIN"/>
    <property type="match status" value="1"/>
</dbReference>
<dbReference type="Pfam" id="PF00096">
    <property type="entry name" value="zf-C2H2"/>
    <property type="match status" value="5"/>
</dbReference>
<dbReference type="Pfam" id="PF13912">
    <property type="entry name" value="zf-C2H2_6"/>
    <property type="match status" value="1"/>
</dbReference>
<dbReference type="SMART" id="SM00355">
    <property type="entry name" value="ZnF_C2H2"/>
    <property type="match status" value="6"/>
</dbReference>
<dbReference type="SUPFAM" id="SSF57667">
    <property type="entry name" value="beta-beta-alpha zinc fingers"/>
    <property type="match status" value="3"/>
</dbReference>
<dbReference type="PROSITE" id="PS00028">
    <property type="entry name" value="ZINC_FINGER_C2H2_1"/>
    <property type="match status" value="6"/>
</dbReference>
<dbReference type="PROSITE" id="PS50157">
    <property type="entry name" value="ZINC_FINGER_C2H2_2"/>
    <property type="match status" value="6"/>
</dbReference>
<gene>
    <name type="primary">fezf1</name>
    <name type="synonym">fez</name>
</gene>
<name>FEZF1_DANRE</name>
<sequence>MDSALYHSAGIFGAPSASTGGSMIASSKPLAFSIERIMARTPEPKSIPFPNLFQAPVGKAEPKQSPAPLHCMIPLMPLACEPPHKLHINGLDHPDTFAYNANELLSIGLNYKNEQQDAAPAIGQYKLFRPRVVNQSSFHAMGAAVCYLNCGEGACPPHAGLVNLHPMASYLLNTPLHARQKSLFSSEKSKQGAVADRCPPGVSFKELSHSHLHHYMKESAHILSEKLFKNSAAKVNSGSPQTKPKVFTCEVCGKVFNAHYNLTRHMPVHTGARPFVCKVCGKGFRQASTLCRHKIIHTQEKPHKCNQCGKAFNRSSTLNTHTRIHAGYKPFICEFCGKGFHQKGNYKNHKLTHSGEKQFKCNICNKAFHQVYNLTFHMHTHNDKKPFTCPTCGKGFCRNFDLKKHIRKLHDISPGPHSPPTPTGNTEGQ</sequence>
<accession>Q25C93</accession>
<feature type="chain" id="PRO_0000295116" description="Fez family zinc finger protein 1">
    <location>
        <begin position="1"/>
        <end position="429"/>
    </location>
</feature>
<feature type="zinc finger region" description="C2H2-type 1" evidence="2">
    <location>
        <begin position="247"/>
        <end position="269"/>
    </location>
</feature>
<feature type="zinc finger region" description="C2H2-type 2" evidence="2">
    <location>
        <begin position="275"/>
        <end position="297"/>
    </location>
</feature>
<feature type="zinc finger region" description="C2H2-type 3" evidence="2">
    <location>
        <begin position="303"/>
        <end position="325"/>
    </location>
</feature>
<feature type="zinc finger region" description="C2H2-type 4" evidence="2">
    <location>
        <begin position="331"/>
        <end position="353"/>
    </location>
</feature>
<feature type="zinc finger region" description="C2H2-type 5" evidence="2">
    <location>
        <begin position="359"/>
        <end position="381"/>
    </location>
</feature>
<feature type="zinc finger region" description="C2H2-type 6" evidence="2">
    <location>
        <begin position="387"/>
        <end position="410"/>
    </location>
</feature>
<feature type="region of interest" description="Disordered" evidence="3">
    <location>
        <begin position="409"/>
        <end position="429"/>
    </location>
</feature>
<feature type="short sequence motif" description="Engrailed homology 1 repressor" evidence="1">
    <location>
        <begin position="29"/>
        <end position="44"/>
    </location>
</feature>
<keyword id="KW-0217">Developmental protein</keyword>
<keyword id="KW-0221">Differentiation</keyword>
<keyword id="KW-0238">DNA-binding</keyword>
<keyword id="KW-0479">Metal-binding</keyword>
<keyword id="KW-0524">Neurogenesis</keyword>
<keyword id="KW-0539">Nucleus</keyword>
<keyword id="KW-1185">Reference proteome</keyword>
<keyword id="KW-0677">Repeat</keyword>
<keyword id="KW-0678">Repressor</keyword>
<keyword id="KW-0804">Transcription</keyword>
<keyword id="KW-0805">Transcription regulation</keyword>
<keyword id="KW-0862">Zinc</keyword>
<keyword id="KW-0863">Zinc-finger</keyword>
<evidence type="ECO:0000250" key="1"/>
<evidence type="ECO:0000255" key="2">
    <source>
        <dbReference type="PROSITE-ProRule" id="PRU00042"/>
    </source>
</evidence>
<evidence type="ECO:0000256" key="3">
    <source>
        <dbReference type="SAM" id="MobiDB-lite"/>
    </source>
</evidence>
<evidence type="ECO:0000305" key="4"/>